<reference key="1">
    <citation type="submission" date="2009-06" db="EMBL/GenBank/DDBJ databases">
        <title>Complete sequence of Desulfovibrio salexigens DSM 2638.</title>
        <authorList>
            <consortium name="US DOE Joint Genome Institute"/>
            <person name="Lucas S."/>
            <person name="Copeland A."/>
            <person name="Lapidus A."/>
            <person name="Glavina del Rio T."/>
            <person name="Tice H."/>
            <person name="Bruce D."/>
            <person name="Goodwin L."/>
            <person name="Pitluck S."/>
            <person name="Munk A.C."/>
            <person name="Brettin T."/>
            <person name="Detter J.C."/>
            <person name="Han C."/>
            <person name="Tapia R."/>
            <person name="Larimer F."/>
            <person name="Land M."/>
            <person name="Hauser L."/>
            <person name="Kyrpides N."/>
            <person name="Anderson I."/>
            <person name="Wall J.D."/>
            <person name="Arkin A.P."/>
            <person name="Dehal P."/>
            <person name="Chivian D."/>
            <person name="Giles B."/>
            <person name="Hazen T.C."/>
        </authorList>
    </citation>
    <scope>NUCLEOTIDE SEQUENCE [LARGE SCALE GENOMIC DNA]</scope>
    <source>
        <strain>ATCC 14822 / DSM 2638 / NCIMB 8403 / VKM B-1763</strain>
    </source>
</reference>
<gene>
    <name evidence="2" type="primary">rpsL</name>
    <name type="ordered locus">Desal_1181</name>
</gene>
<proteinExistence type="inferred from homology"/>
<accession>C6C181</accession>
<name>RS12_MARSD</name>
<evidence type="ECO:0000250" key="1"/>
<evidence type="ECO:0000255" key="2">
    <source>
        <dbReference type="HAMAP-Rule" id="MF_00403"/>
    </source>
</evidence>
<evidence type="ECO:0000305" key="3"/>
<feature type="chain" id="PRO_1000205909" description="Small ribosomal subunit protein uS12">
    <location>
        <begin position="1"/>
        <end position="123"/>
    </location>
</feature>
<feature type="modified residue" description="3-methylthioaspartic acid" evidence="1">
    <location>
        <position position="89"/>
    </location>
</feature>
<protein>
    <recommendedName>
        <fullName evidence="2">Small ribosomal subunit protein uS12</fullName>
    </recommendedName>
    <alternativeName>
        <fullName evidence="3">30S ribosomal protein S12</fullName>
    </alternativeName>
</protein>
<dbReference type="EMBL" id="CP001649">
    <property type="protein sequence ID" value="ACS79244.1"/>
    <property type="molecule type" value="Genomic_DNA"/>
</dbReference>
<dbReference type="RefSeq" id="WP_015851063.1">
    <property type="nucleotide sequence ID" value="NC_012881.1"/>
</dbReference>
<dbReference type="SMR" id="C6C181"/>
<dbReference type="STRING" id="526222.Desal_1181"/>
<dbReference type="KEGG" id="dsa:Desal_1181"/>
<dbReference type="eggNOG" id="COG0048">
    <property type="taxonomic scope" value="Bacteria"/>
</dbReference>
<dbReference type="HOGENOM" id="CLU_104295_1_2_7"/>
<dbReference type="OrthoDB" id="9802366at2"/>
<dbReference type="Proteomes" id="UP000002601">
    <property type="component" value="Chromosome"/>
</dbReference>
<dbReference type="GO" id="GO:0015935">
    <property type="term" value="C:small ribosomal subunit"/>
    <property type="evidence" value="ECO:0007669"/>
    <property type="project" value="InterPro"/>
</dbReference>
<dbReference type="GO" id="GO:0019843">
    <property type="term" value="F:rRNA binding"/>
    <property type="evidence" value="ECO:0007669"/>
    <property type="project" value="UniProtKB-UniRule"/>
</dbReference>
<dbReference type="GO" id="GO:0003735">
    <property type="term" value="F:structural constituent of ribosome"/>
    <property type="evidence" value="ECO:0007669"/>
    <property type="project" value="InterPro"/>
</dbReference>
<dbReference type="GO" id="GO:0000049">
    <property type="term" value="F:tRNA binding"/>
    <property type="evidence" value="ECO:0007669"/>
    <property type="project" value="UniProtKB-UniRule"/>
</dbReference>
<dbReference type="GO" id="GO:0006412">
    <property type="term" value="P:translation"/>
    <property type="evidence" value="ECO:0007669"/>
    <property type="project" value="UniProtKB-UniRule"/>
</dbReference>
<dbReference type="CDD" id="cd03368">
    <property type="entry name" value="Ribosomal_S12"/>
    <property type="match status" value="1"/>
</dbReference>
<dbReference type="FunFam" id="2.40.50.140:FF:000001">
    <property type="entry name" value="30S ribosomal protein S12"/>
    <property type="match status" value="1"/>
</dbReference>
<dbReference type="Gene3D" id="2.40.50.140">
    <property type="entry name" value="Nucleic acid-binding proteins"/>
    <property type="match status" value="1"/>
</dbReference>
<dbReference type="HAMAP" id="MF_00403_B">
    <property type="entry name" value="Ribosomal_uS12_B"/>
    <property type="match status" value="1"/>
</dbReference>
<dbReference type="InterPro" id="IPR012340">
    <property type="entry name" value="NA-bd_OB-fold"/>
</dbReference>
<dbReference type="InterPro" id="IPR006032">
    <property type="entry name" value="Ribosomal_uS12"/>
</dbReference>
<dbReference type="InterPro" id="IPR005679">
    <property type="entry name" value="Ribosomal_uS12_bac"/>
</dbReference>
<dbReference type="NCBIfam" id="TIGR00981">
    <property type="entry name" value="rpsL_bact"/>
    <property type="match status" value="1"/>
</dbReference>
<dbReference type="PANTHER" id="PTHR11652">
    <property type="entry name" value="30S RIBOSOMAL PROTEIN S12 FAMILY MEMBER"/>
    <property type="match status" value="1"/>
</dbReference>
<dbReference type="Pfam" id="PF00164">
    <property type="entry name" value="Ribosom_S12_S23"/>
    <property type="match status" value="1"/>
</dbReference>
<dbReference type="PIRSF" id="PIRSF002133">
    <property type="entry name" value="Ribosomal_S12/S23"/>
    <property type="match status" value="1"/>
</dbReference>
<dbReference type="PRINTS" id="PR01034">
    <property type="entry name" value="RIBOSOMALS12"/>
</dbReference>
<dbReference type="SUPFAM" id="SSF50249">
    <property type="entry name" value="Nucleic acid-binding proteins"/>
    <property type="match status" value="1"/>
</dbReference>
<dbReference type="PROSITE" id="PS00055">
    <property type="entry name" value="RIBOSOMAL_S12"/>
    <property type="match status" value="1"/>
</dbReference>
<sequence>MPTINQLIRKGREKQLKRKKTPALQACPQRRGVCTRVYTTTPKKPNSALRKVARVRLTNAIEVTAYIGGEGHNLQEHSVVLIRGGRVKDLPGVRYHIVRGSLDTAGVADRRQGRSKYGAKRPK</sequence>
<organism>
    <name type="scientific">Maridesulfovibrio salexigens (strain ATCC 14822 / DSM 2638 / NCIMB 8403 / VKM B-1763)</name>
    <name type="common">Desulfovibrio salexigens</name>
    <dbReference type="NCBI Taxonomy" id="526222"/>
    <lineage>
        <taxon>Bacteria</taxon>
        <taxon>Pseudomonadati</taxon>
        <taxon>Thermodesulfobacteriota</taxon>
        <taxon>Desulfovibrionia</taxon>
        <taxon>Desulfovibrionales</taxon>
        <taxon>Desulfovibrionaceae</taxon>
        <taxon>Maridesulfovibrio</taxon>
    </lineage>
</organism>
<keyword id="KW-0488">Methylation</keyword>
<keyword id="KW-1185">Reference proteome</keyword>
<keyword id="KW-0687">Ribonucleoprotein</keyword>
<keyword id="KW-0689">Ribosomal protein</keyword>
<keyword id="KW-0694">RNA-binding</keyword>
<keyword id="KW-0699">rRNA-binding</keyword>
<keyword id="KW-0820">tRNA-binding</keyword>
<comment type="function">
    <text evidence="2">With S4 and S5 plays an important role in translational accuracy.</text>
</comment>
<comment type="function">
    <text evidence="2">Interacts with and stabilizes bases of the 16S rRNA that are involved in tRNA selection in the A site and with the mRNA backbone. Located at the interface of the 30S and 50S subunits, it traverses the body of the 30S subunit contacting proteins on the other side and probably holding the rRNA structure together. The combined cluster of proteins S8, S12 and S17 appears to hold together the shoulder and platform of the 30S subunit.</text>
</comment>
<comment type="subunit">
    <text evidence="2">Part of the 30S ribosomal subunit. Contacts proteins S8 and S17. May interact with IF1 in the 30S initiation complex.</text>
</comment>
<comment type="similarity">
    <text evidence="2">Belongs to the universal ribosomal protein uS12 family.</text>
</comment>